<evidence type="ECO:0000255" key="1">
    <source>
        <dbReference type="HAMAP-Rule" id="MF_00149"/>
    </source>
</evidence>
<protein>
    <recommendedName>
        <fullName evidence="1">DNA mismatch repair protein MutL</fullName>
    </recommendedName>
</protein>
<dbReference type="EMBL" id="CP000962">
    <property type="protein sequence ID" value="ACA56562.1"/>
    <property type="molecule type" value="Genomic_DNA"/>
</dbReference>
<dbReference type="RefSeq" id="WP_012344415.1">
    <property type="nucleotide sequence ID" value="NC_010520.1"/>
</dbReference>
<dbReference type="SMR" id="B1KSA2"/>
<dbReference type="KEGG" id="cbl:CLK_1180"/>
<dbReference type="HOGENOM" id="CLU_004131_4_1_9"/>
<dbReference type="GO" id="GO:0032300">
    <property type="term" value="C:mismatch repair complex"/>
    <property type="evidence" value="ECO:0007669"/>
    <property type="project" value="InterPro"/>
</dbReference>
<dbReference type="GO" id="GO:0005524">
    <property type="term" value="F:ATP binding"/>
    <property type="evidence" value="ECO:0007669"/>
    <property type="project" value="InterPro"/>
</dbReference>
<dbReference type="GO" id="GO:0016887">
    <property type="term" value="F:ATP hydrolysis activity"/>
    <property type="evidence" value="ECO:0007669"/>
    <property type="project" value="InterPro"/>
</dbReference>
<dbReference type="GO" id="GO:0140664">
    <property type="term" value="F:ATP-dependent DNA damage sensor activity"/>
    <property type="evidence" value="ECO:0007669"/>
    <property type="project" value="InterPro"/>
</dbReference>
<dbReference type="GO" id="GO:0030983">
    <property type="term" value="F:mismatched DNA binding"/>
    <property type="evidence" value="ECO:0007669"/>
    <property type="project" value="InterPro"/>
</dbReference>
<dbReference type="GO" id="GO:0006298">
    <property type="term" value="P:mismatch repair"/>
    <property type="evidence" value="ECO:0007669"/>
    <property type="project" value="UniProtKB-UniRule"/>
</dbReference>
<dbReference type="CDD" id="cd16926">
    <property type="entry name" value="HATPase_MutL-MLH-PMS-like"/>
    <property type="match status" value="1"/>
</dbReference>
<dbReference type="CDD" id="cd00782">
    <property type="entry name" value="MutL_Trans"/>
    <property type="match status" value="1"/>
</dbReference>
<dbReference type="FunFam" id="3.30.565.10:FF:000003">
    <property type="entry name" value="DNA mismatch repair endonuclease MutL"/>
    <property type="match status" value="1"/>
</dbReference>
<dbReference type="Gene3D" id="3.30.230.10">
    <property type="match status" value="1"/>
</dbReference>
<dbReference type="Gene3D" id="3.30.565.10">
    <property type="entry name" value="Histidine kinase-like ATPase, C-terminal domain"/>
    <property type="match status" value="1"/>
</dbReference>
<dbReference type="Gene3D" id="3.30.1540.20">
    <property type="entry name" value="MutL, C-terminal domain, dimerisation subdomain"/>
    <property type="match status" value="1"/>
</dbReference>
<dbReference type="Gene3D" id="3.30.1370.100">
    <property type="entry name" value="MutL, C-terminal domain, regulatory subdomain"/>
    <property type="match status" value="1"/>
</dbReference>
<dbReference type="HAMAP" id="MF_00149">
    <property type="entry name" value="DNA_mis_repair"/>
    <property type="match status" value="1"/>
</dbReference>
<dbReference type="InterPro" id="IPR014762">
    <property type="entry name" value="DNA_mismatch_repair_CS"/>
</dbReference>
<dbReference type="InterPro" id="IPR020667">
    <property type="entry name" value="DNA_mismatch_repair_MutL"/>
</dbReference>
<dbReference type="InterPro" id="IPR013507">
    <property type="entry name" value="DNA_mismatch_S5_2-like"/>
</dbReference>
<dbReference type="InterPro" id="IPR036890">
    <property type="entry name" value="HATPase_C_sf"/>
</dbReference>
<dbReference type="InterPro" id="IPR002099">
    <property type="entry name" value="MutL/Mlh/PMS"/>
</dbReference>
<dbReference type="InterPro" id="IPR038973">
    <property type="entry name" value="MutL/Mlh/Pms-like"/>
</dbReference>
<dbReference type="InterPro" id="IPR014790">
    <property type="entry name" value="MutL_C"/>
</dbReference>
<dbReference type="InterPro" id="IPR042120">
    <property type="entry name" value="MutL_C_dimsub"/>
</dbReference>
<dbReference type="InterPro" id="IPR042121">
    <property type="entry name" value="MutL_C_regsub"/>
</dbReference>
<dbReference type="InterPro" id="IPR037198">
    <property type="entry name" value="MutL_C_sf"/>
</dbReference>
<dbReference type="InterPro" id="IPR020568">
    <property type="entry name" value="Ribosomal_Su5_D2-typ_SF"/>
</dbReference>
<dbReference type="InterPro" id="IPR014721">
    <property type="entry name" value="Ribsml_uS5_D2-typ_fold_subgr"/>
</dbReference>
<dbReference type="NCBIfam" id="TIGR00585">
    <property type="entry name" value="mutl"/>
    <property type="match status" value="1"/>
</dbReference>
<dbReference type="PANTHER" id="PTHR10073">
    <property type="entry name" value="DNA MISMATCH REPAIR PROTEIN MLH, PMS, MUTL"/>
    <property type="match status" value="1"/>
</dbReference>
<dbReference type="PANTHER" id="PTHR10073:SF12">
    <property type="entry name" value="DNA MISMATCH REPAIR PROTEIN MLH1"/>
    <property type="match status" value="1"/>
</dbReference>
<dbReference type="Pfam" id="PF01119">
    <property type="entry name" value="DNA_mis_repair"/>
    <property type="match status" value="1"/>
</dbReference>
<dbReference type="Pfam" id="PF13589">
    <property type="entry name" value="HATPase_c_3"/>
    <property type="match status" value="1"/>
</dbReference>
<dbReference type="Pfam" id="PF08676">
    <property type="entry name" value="MutL_C"/>
    <property type="match status" value="1"/>
</dbReference>
<dbReference type="SMART" id="SM01340">
    <property type="entry name" value="DNA_mis_repair"/>
    <property type="match status" value="1"/>
</dbReference>
<dbReference type="SMART" id="SM00853">
    <property type="entry name" value="MutL_C"/>
    <property type="match status" value="1"/>
</dbReference>
<dbReference type="SUPFAM" id="SSF55874">
    <property type="entry name" value="ATPase domain of HSP90 chaperone/DNA topoisomerase II/histidine kinase"/>
    <property type="match status" value="1"/>
</dbReference>
<dbReference type="SUPFAM" id="SSF118116">
    <property type="entry name" value="DNA mismatch repair protein MutL"/>
    <property type="match status" value="1"/>
</dbReference>
<dbReference type="SUPFAM" id="SSF54211">
    <property type="entry name" value="Ribosomal protein S5 domain 2-like"/>
    <property type="match status" value="1"/>
</dbReference>
<dbReference type="PROSITE" id="PS00058">
    <property type="entry name" value="DNA_MISMATCH_REPAIR_1"/>
    <property type="match status" value="1"/>
</dbReference>
<proteinExistence type="inferred from homology"/>
<comment type="function">
    <text evidence="1">This protein is involved in the repair of mismatches in DNA. It is required for dam-dependent methyl-directed DNA mismatch repair. May act as a 'molecular matchmaker', a protein that promotes the formation of a stable complex between two or more DNA-binding proteins in an ATP-dependent manner without itself being part of a final effector complex.</text>
</comment>
<comment type="similarity">
    <text evidence="1">Belongs to the DNA mismatch repair MutL/HexB family.</text>
</comment>
<keyword id="KW-0227">DNA damage</keyword>
<keyword id="KW-0234">DNA repair</keyword>
<name>MUTL_CLOBM</name>
<reference key="1">
    <citation type="journal article" date="2007" name="PLoS ONE">
        <title>Analysis of the neurotoxin complex genes in Clostridium botulinum A1-A4 and B1 strains: BoNT/A3, /Ba4 and /B1 clusters are located within plasmids.</title>
        <authorList>
            <person name="Smith T.J."/>
            <person name="Hill K.K."/>
            <person name="Foley B.T."/>
            <person name="Detter J.C."/>
            <person name="Munk A.C."/>
            <person name="Bruce D.C."/>
            <person name="Doggett N.A."/>
            <person name="Smith L.A."/>
            <person name="Marks J.D."/>
            <person name="Xie G."/>
            <person name="Brettin T.S."/>
        </authorList>
    </citation>
    <scope>NUCLEOTIDE SEQUENCE [LARGE SCALE GENOMIC DNA]</scope>
    <source>
        <strain>Loch Maree / Type A3</strain>
    </source>
</reference>
<organism>
    <name type="scientific">Clostridium botulinum (strain Loch Maree / Type A3)</name>
    <dbReference type="NCBI Taxonomy" id="498214"/>
    <lineage>
        <taxon>Bacteria</taxon>
        <taxon>Bacillati</taxon>
        <taxon>Bacillota</taxon>
        <taxon>Clostridia</taxon>
        <taxon>Eubacteriales</taxon>
        <taxon>Clostridiaceae</taxon>
        <taxon>Clostridium</taxon>
    </lineage>
</organism>
<gene>
    <name evidence="1" type="primary">mutL</name>
    <name type="ordered locus">CLK_1180</name>
</gene>
<feature type="chain" id="PRO_1000096644" description="DNA mismatch repair protein MutL">
    <location>
        <begin position="1"/>
        <end position="666"/>
    </location>
</feature>
<sequence>MRKINLLDLETTNKIAAGEVIERPFSVVKELVENSIDAGAKNITIEIEDGGQKLIKIIDDGEGIYPIDIKNAFLPHATSKINSIEDIYKISTMGFRGEALASISSVSKTKLKSRVDSYNFGKEIYIEGGKIEYLKDTGCNVGTTIEVSDLFYNVPARLKFLKSARSDSSSISDIVNRFILAHPDISFNLINKGKQSIKSYGTGNLKDSIRCVYNKTISENLINFESHKDIISVYGFIGKPEISRKSRTNQSIFVNKRYVKSKFITAAVENAFKSFLTVNSYPFFVIFIDIFPEYIDVNVHPTKSEVKFKDERAMFKTIFDAVHEAIKGELKESFTNFFNKEDINIYDSEKSIAETIKLEKEEVQIPIDLNSNNKIDIFGNNINKLPTNTEVLKNIGIKEKNILENNDNFYTSKQNEIYYTNKNDEYLNSCNKDDYSKIEKPLQKGNKNPDALYLNEHNTNSSSINIKENKSNNFYVDMKIIGQFNNTYILIEKDKELYIIDQHAAHEKVLFEKFKSEIEKGYVISQILLSPVVIELSEDEFNIYEENKDIFKNSGFAVENFGESTINIKEVPLILGKPNVENLFMDILYNLKNMKSKETSTIKYNAIATLACKSAVKANDNLKEEEIKKLIEDMLILNNPYTCPHGRPTMIKFTLKDLEKKFKRIQ</sequence>
<accession>B1KSA2</accession>